<feature type="chain" id="PRO_0000347678" description="Alanine--tRNA ligase">
    <location>
        <begin position="1"/>
        <end position="881"/>
    </location>
</feature>
<feature type="binding site" evidence="1">
    <location>
        <position position="568"/>
    </location>
    <ligand>
        <name>Zn(2+)</name>
        <dbReference type="ChEBI" id="CHEBI:29105"/>
    </ligand>
</feature>
<feature type="binding site" evidence="1">
    <location>
        <position position="572"/>
    </location>
    <ligand>
        <name>Zn(2+)</name>
        <dbReference type="ChEBI" id="CHEBI:29105"/>
    </ligand>
</feature>
<feature type="binding site" evidence="1">
    <location>
        <position position="670"/>
    </location>
    <ligand>
        <name>Zn(2+)</name>
        <dbReference type="ChEBI" id="CHEBI:29105"/>
    </ligand>
</feature>
<feature type="binding site" evidence="1">
    <location>
        <position position="674"/>
    </location>
    <ligand>
        <name>Zn(2+)</name>
        <dbReference type="ChEBI" id="CHEBI:29105"/>
    </ligand>
</feature>
<evidence type="ECO:0000255" key="1">
    <source>
        <dbReference type="HAMAP-Rule" id="MF_00036"/>
    </source>
</evidence>
<accession>Q2RHZ3</accession>
<protein>
    <recommendedName>
        <fullName evidence="1">Alanine--tRNA ligase</fullName>
        <ecNumber evidence="1">6.1.1.7</ecNumber>
    </recommendedName>
    <alternativeName>
        <fullName evidence="1">Alanyl-tRNA synthetase</fullName>
        <shortName evidence="1">AlaRS</shortName>
    </alternativeName>
</protein>
<sequence>MTGNELRERFLKFFASKGHTIVHSSSLVPANDPTLLFTNAGMVQFKDVYLGLDRRPFTRATTAQKCVRAGGKHNDLDTVGRTARHHTFFEMLGNFSFGDYFKREAITYAWEFLTRVLELPPERLWVTVYQEDDEAYQLWQEIAGIPAERIVRMGEKDNFWAMGDTGPCGPCSEIIYDRGPEHACSSTPCALGACDCDRWLEIWNLVFMQYERDSNGNLSPLPRPSIDTGMGLERVASVLQGVDSNFDTDLIAPLIKAVEKITGRTYDPGEAGFPFRVIADHARSCTFLIADGILPGNEGRSYVLRRILRRAARFGKALGIDEPFLYRLVDTVVAIMGGAYPEVAEQQEHIARVIEQEEIRFHETLNDGLKVLNGILERARQEGREVVSGLEAFTLYDTYGFPLDLTEEIAGEGGFKVDRDGFEKAMAAQRERARAAREDVKAYDFALAFAGALEDISGTAFTGYDQLEDKGTVLALFQEGARVTSLEANATGYVVLDRTPCYPEGGGQVGDRGELKWSGGQARVEDTRRLPDGKIVHQINVTAGTLVVGQEVEIAVDRERRQATARNHTVTHLLHRALKNILGEHVNQAGSLVTPERLRFDFTHFAPLTGEELRAVEAEVNQKILANLPVTTLETSYQEAKAMGATALFGEKYGERVRVVKIDAYSMELCGGTHLGSTSEAGSFRLVSESGIGAGVRRVEAVTGAAALEMALQDRQELATIAGLLKVPPDQAIQRVRHLLEQNKENERELAQLRNELASYTIDKLLDRVQEVAGVPVLPARVQITDPEALREMAERLRSRLGSGVVILGSQHNGRVNFVAMVSKDLVQRGIHAGNLLREVARIASGGGGGRADMAQAGGKDPGKLDQALAYSLKVVAAQVR</sequence>
<keyword id="KW-0030">Aminoacyl-tRNA synthetase</keyword>
<keyword id="KW-0067">ATP-binding</keyword>
<keyword id="KW-0963">Cytoplasm</keyword>
<keyword id="KW-0436">Ligase</keyword>
<keyword id="KW-0479">Metal-binding</keyword>
<keyword id="KW-0547">Nucleotide-binding</keyword>
<keyword id="KW-0648">Protein biosynthesis</keyword>
<keyword id="KW-0694">RNA-binding</keyword>
<keyword id="KW-0820">tRNA-binding</keyword>
<keyword id="KW-0862">Zinc</keyword>
<name>SYA_MOOTA</name>
<proteinExistence type="inferred from homology"/>
<organism>
    <name type="scientific">Moorella thermoacetica (strain ATCC 39073 / JCM 9320)</name>
    <dbReference type="NCBI Taxonomy" id="264732"/>
    <lineage>
        <taxon>Bacteria</taxon>
        <taxon>Bacillati</taxon>
        <taxon>Bacillota</taxon>
        <taxon>Clostridia</taxon>
        <taxon>Moorellales</taxon>
        <taxon>Moorellaceae</taxon>
        <taxon>Moorella</taxon>
    </lineage>
</organism>
<gene>
    <name evidence="1" type="primary">alaS</name>
    <name type="ordered locus">Moth_1644</name>
</gene>
<dbReference type="EC" id="6.1.1.7" evidence="1"/>
<dbReference type="EMBL" id="CP000232">
    <property type="protein sequence ID" value="ABC19946.1"/>
    <property type="molecule type" value="Genomic_DNA"/>
</dbReference>
<dbReference type="RefSeq" id="YP_430489.1">
    <property type="nucleotide sequence ID" value="NC_007644.1"/>
</dbReference>
<dbReference type="SMR" id="Q2RHZ3"/>
<dbReference type="STRING" id="264732.Moth_1644"/>
<dbReference type="EnsemblBacteria" id="ABC19946">
    <property type="protein sequence ID" value="ABC19946"/>
    <property type="gene ID" value="Moth_1644"/>
</dbReference>
<dbReference type="KEGG" id="mta:Moth_1644"/>
<dbReference type="PATRIC" id="fig|264732.11.peg.1782"/>
<dbReference type="eggNOG" id="COG0013">
    <property type="taxonomic scope" value="Bacteria"/>
</dbReference>
<dbReference type="HOGENOM" id="CLU_004485_1_1_9"/>
<dbReference type="OrthoDB" id="9803884at2"/>
<dbReference type="GO" id="GO:0005829">
    <property type="term" value="C:cytosol"/>
    <property type="evidence" value="ECO:0007669"/>
    <property type="project" value="TreeGrafter"/>
</dbReference>
<dbReference type="GO" id="GO:0004813">
    <property type="term" value="F:alanine-tRNA ligase activity"/>
    <property type="evidence" value="ECO:0007669"/>
    <property type="project" value="UniProtKB-UniRule"/>
</dbReference>
<dbReference type="GO" id="GO:0002161">
    <property type="term" value="F:aminoacyl-tRNA deacylase activity"/>
    <property type="evidence" value="ECO:0007669"/>
    <property type="project" value="TreeGrafter"/>
</dbReference>
<dbReference type="GO" id="GO:0005524">
    <property type="term" value="F:ATP binding"/>
    <property type="evidence" value="ECO:0007669"/>
    <property type="project" value="UniProtKB-UniRule"/>
</dbReference>
<dbReference type="GO" id="GO:0140096">
    <property type="term" value="F:catalytic activity, acting on a protein"/>
    <property type="evidence" value="ECO:0007669"/>
    <property type="project" value="UniProtKB-ARBA"/>
</dbReference>
<dbReference type="GO" id="GO:0016740">
    <property type="term" value="F:transferase activity"/>
    <property type="evidence" value="ECO:0007669"/>
    <property type="project" value="UniProtKB-ARBA"/>
</dbReference>
<dbReference type="GO" id="GO:0000049">
    <property type="term" value="F:tRNA binding"/>
    <property type="evidence" value="ECO:0007669"/>
    <property type="project" value="UniProtKB-KW"/>
</dbReference>
<dbReference type="GO" id="GO:0008270">
    <property type="term" value="F:zinc ion binding"/>
    <property type="evidence" value="ECO:0007669"/>
    <property type="project" value="UniProtKB-UniRule"/>
</dbReference>
<dbReference type="GO" id="GO:0006419">
    <property type="term" value="P:alanyl-tRNA aminoacylation"/>
    <property type="evidence" value="ECO:0007669"/>
    <property type="project" value="UniProtKB-UniRule"/>
</dbReference>
<dbReference type="CDD" id="cd00673">
    <property type="entry name" value="AlaRS_core"/>
    <property type="match status" value="1"/>
</dbReference>
<dbReference type="FunFam" id="2.40.30.130:FF:000001">
    <property type="entry name" value="Alanine--tRNA ligase"/>
    <property type="match status" value="1"/>
</dbReference>
<dbReference type="FunFam" id="3.10.310.40:FF:000001">
    <property type="entry name" value="Alanine--tRNA ligase"/>
    <property type="match status" value="1"/>
</dbReference>
<dbReference type="FunFam" id="3.30.54.20:FF:000001">
    <property type="entry name" value="Alanine--tRNA ligase"/>
    <property type="match status" value="1"/>
</dbReference>
<dbReference type="FunFam" id="3.30.930.10:FF:000004">
    <property type="entry name" value="Alanine--tRNA ligase"/>
    <property type="match status" value="1"/>
</dbReference>
<dbReference type="FunFam" id="3.30.980.10:FF:000004">
    <property type="entry name" value="Alanine--tRNA ligase, cytoplasmic"/>
    <property type="match status" value="1"/>
</dbReference>
<dbReference type="Gene3D" id="2.40.30.130">
    <property type="match status" value="1"/>
</dbReference>
<dbReference type="Gene3D" id="3.10.310.40">
    <property type="match status" value="1"/>
</dbReference>
<dbReference type="Gene3D" id="3.30.54.20">
    <property type="match status" value="1"/>
</dbReference>
<dbReference type="Gene3D" id="6.10.250.550">
    <property type="match status" value="1"/>
</dbReference>
<dbReference type="Gene3D" id="3.30.930.10">
    <property type="entry name" value="Bira Bifunctional Protein, Domain 2"/>
    <property type="match status" value="1"/>
</dbReference>
<dbReference type="Gene3D" id="3.30.980.10">
    <property type="entry name" value="Threonyl-trna Synthetase, Chain A, domain 2"/>
    <property type="match status" value="1"/>
</dbReference>
<dbReference type="HAMAP" id="MF_00036_B">
    <property type="entry name" value="Ala_tRNA_synth_B"/>
    <property type="match status" value="1"/>
</dbReference>
<dbReference type="InterPro" id="IPR045864">
    <property type="entry name" value="aa-tRNA-synth_II/BPL/LPL"/>
</dbReference>
<dbReference type="InterPro" id="IPR002318">
    <property type="entry name" value="Ala-tRNA-lgiase_IIc"/>
</dbReference>
<dbReference type="InterPro" id="IPR018162">
    <property type="entry name" value="Ala-tRNA-ligase_IIc_anticod-bd"/>
</dbReference>
<dbReference type="InterPro" id="IPR018165">
    <property type="entry name" value="Ala-tRNA-synth_IIc_core"/>
</dbReference>
<dbReference type="InterPro" id="IPR018164">
    <property type="entry name" value="Ala-tRNA-synth_IIc_N"/>
</dbReference>
<dbReference type="InterPro" id="IPR050058">
    <property type="entry name" value="Ala-tRNA_ligase"/>
</dbReference>
<dbReference type="InterPro" id="IPR023033">
    <property type="entry name" value="Ala_tRNA_ligase_euk/bac"/>
</dbReference>
<dbReference type="InterPro" id="IPR003156">
    <property type="entry name" value="DHHA1_dom"/>
</dbReference>
<dbReference type="InterPro" id="IPR018163">
    <property type="entry name" value="Thr/Ala-tRNA-synth_IIc_edit"/>
</dbReference>
<dbReference type="InterPro" id="IPR009000">
    <property type="entry name" value="Transl_B-barrel_sf"/>
</dbReference>
<dbReference type="InterPro" id="IPR012947">
    <property type="entry name" value="tRNA_SAD"/>
</dbReference>
<dbReference type="NCBIfam" id="TIGR00344">
    <property type="entry name" value="alaS"/>
    <property type="match status" value="1"/>
</dbReference>
<dbReference type="PANTHER" id="PTHR11777:SF9">
    <property type="entry name" value="ALANINE--TRNA LIGASE, CYTOPLASMIC"/>
    <property type="match status" value="1"/>
</dbReference>
<dbReference type="PANTHER" id="PTHR11777">
    <property type="entry name" value="ALANYL-TRNA SYNTHETASE"/>
    <property type="match status" value="1"/>
</dbReference>
<dbReference type="Pfam" id="PF02272">
    <property type="entry name" value="DHHA1"/>
    <property type="match status" value="1"/>
</dbReference>
<dbReference type="Pfam" id="PF01411">
    <property type="entry name" value="tRNA-synt_2c"/>
    <property type="match status" value="1"/>
</dbReference>
<dbReference type="Pfam" id="PF07973">
    <property type="entry name" value="tRNA_SAD"/>
    <property type="match status" value="1"/>
</dbReference>
<dbReference type="PRINTS" id="PR00980">
    <property type="entry name" value="TRNASYNTHALA"/>
</dbReference>
<dbReference type="SMART" id="SM00863">
    <property type="entry name" value="tRNA_SAD"/>
    <property type="match status" value="1"/>
</dbReference>
<dbReference type="SUPFAM" id="SSF55681">
    <property type="entry name" value="Class II aaRS and biotin synthetases"/>
    <property type="match status" value="1"/>
</dbReference>
<dbReference type="SUPFAM" id="SSF101353">
    <property type="entry name" value="Putative anticodon-binding domain of alanyl-tRNA synthetase (AlaRS)"/>
    <property type="match status" value="1"/>
</dbReference>
<dbReference type="SUPFAM" id="SSF55186">
    <property type="entry name" value="ThrRS/AlaRS common domain"/>
    <property type="match status" value="1"/>
</dbReference>
<dbReference type="SUPFAM" id="SSF50447">
    <property type="entry name" value="Translation proteins"/>
    <property type="match status" value="1"/>
</dbReference>
<dbReference type="PROSITE" id="PS50860">
    <property type="entry name" value="AA_TRNA_LIGASE_II_ALA"/>
    <property type="match status" value="1"/>
</dbReference>
<reference key="1">
    <citation type="journal article" date="2008" name="Environ. Microbiol.">
        <title>The complete genome sequence of Moorella thermoacetica (f. Clostridium thermoaceticum).</title>
        <authorList>
            <person name="Pierce E."/>
            <person name="Xie G."/>
            <person name="Barabote R.D."/>
            <person name="Saunders E."/>
            <person name="Han C.S."/>
            <person name="Detter J.C."/>
            <person name="Richardson P."/>
            <person name="Brettin T.S."/>
            <person name="Das A."/>
            <person name="Ljungdahl L.G."/>
            <person name="Ragsdale S.W."/>
        </authorList>
    </citation>
    <scope>NUCLEOTIDE SEQUENCE [LARGE SCALE GENOMIC DNA]</scope>
    <source>
        <strain>ATCC 39073 / JCM 9320</strain>
    </source>
</reference>
<comment type="function">
    <text evidence="1">Catalyzes the attachment of alanine to tRNA(Ala) in a two-step reaction: alanine is first activated by ATP to form Ala-AMP and then transferred to the acceptor end of tRNA(Ala). Also edits incorrectly charged Ser-tRNA(Ala) and Gly-tRNA(Ala) via its editing domain.</text>
</comment>
<comment type="catalytic activity">
    <reaction evidence="1">
        <text>tRNA(Ala) + L-alanine + ATP = L-alanyl-tRNA(Ala) + AMP + diphosphate</text>
        <dbReference type="Rhea" id="RHEA:12540"/>
        <dbReference type="Rhea" id="RHEA-COMP:9657"/>
        <dbReference type="Rhea" id="RHEA-COMP:9923"/>
        <dbReference type="ChEBI" id="CHEBI:30616"/>
        <dbReference type="ChEBI" id="CHEBI:33019"/>
        <dbReference type="ChEBI" id="CHEBI:57972"/>
        <dbReference type="ChEBI" id="CHEBI:78442"/>
        <dbReference type="ChEBI" id="CHEBI:78497"/>
        <dbReference type="ChEBI" id="CHEBI:456215"/>
        <dbReference type="EC" id="6.1.1.7"/>
    </reaction>
</comment>
<comment type="cofactor">
    <cofactor evidence="1">
        <name>Zn(2+)</name>
        <dbReference type="ChEBI" id="CHEBI:29105"/>
    </cofactor>
    <text evidence="1">Binds 1 zinc ion per subunit.</text>
</comment>
<comment type="subcellular location">
    <subcellularLocation>
        <location evidence="1">Cytoplasm</location>
    </subcellularLocation>
</comment>
<comment type="domain">
    <text evidence="1">Consists of three domains; the N-terminal catalytic domain, the editing domain and the C-terminal C-Ala domain. The editing domain removes incorrectly charged amino acids, while the C-Ala domain, along with tRNA(Ala), serves as a bridge to cooperatively bring together the editing and aminoacylation centers thus stimulating deacylation of misacylated tRNAs.</text>
</comment>
<comment type="similarity">
    <text evidence="1">Belongs to the class-II aminoacyl-tRNA synthetase family.</text>
</comment>